<protein>
    <recommendedName>
        <fullName evidence="1">Alanine racemase</fullName>
        <ecNumber evidence="1">5.1.1.1</ecNumber>
    </recommendedName>
</protein>
<reference key="1">
    <citation type="journal article" date="2001" name="Proc. Natl. Acad. Sci. U.S.A.">
        <title>Complete genomic sequence of Pasteurella multocida Pm70.</title>
        <authorList>
            <person name="May B.J."/>
            <person name="Zhang Q."/>
            <person name="Li L.L."/>
            <person name="Paustian M.L."/>
            <person name="Whittam T.S."/>
            <person name="Kapur V."/>
        </authorList>
    </citation>
    <scope>NUCLEOTIDE SEQUENCE [LARGE SCALE GENOMIC DNA]</scope>
    <source>
        <strain>Pm70</strain>
    </source>
</reference>
<name>ALR_PASMU</name>
<gene>
    <name type="primary">alr</name>
    <name type="ordered locus">PM0413</name>
</gene>
<dbReference type="EC" id="5.1.1.1" evidence="1"/>
<dbReference type="EMBL" id="AE004439">
    <property type="protein sequence ID" value="AAK02497.1"/>
    <property type="molecule type" value="Genomic_DNA"/>
</dbReference>
<dbReference type="SMR" id="Q9CNL5"/>
<dbReference type="STRING" id="272843.PM0413"/>
<dbReference type="EnsemblBacteria" id="AAK02497">
    <property type="protein sequence ID" value="AAK02497"/>
    <property type="gene ID" value="PM0413"/>
</dbReference>
<dbReference type="KEGG" id="pmu:PM0413"/>
<dbReference type="HOGENOM" id="CLU_028393_1_0_6"/>
<dbReference type="UniPathway" id="UPA00042">
    <property type="reaction ID" value="UER00497"/>
</dbReference>
<dbReference type="Proteomes" id="UP000000809">
    <property type="component" value="Chromosome"/>
</dbReference>
<dbReference type="GO" id="GO:0005829">
    <property type="term" value="C:cytosol"/>
    <property type="evidence" value="ECO:0007669"/>
    <property type="project" value="TreeGrafter"/>
</dbReference>
<dbReference type="GO" id="GO:0008784">
    <property type="term" value="F:alanine racemase activity"/>
    <property type="evidence" value="ECO:0007669"/>
    <property type="project" value="UniProtKB-UniRule"/>
</dbReference>
<dbReference type="GO" id="GO:0030170">
    <property type="term" value="F:pyridoxal phosphate binding"/>
    <property type="evidence" value="ECO:0007669"/>
    <property type="project" value="UniProtKB-UniRule"/>
</dbReference>
<dbReference type="GO" id="GO:0030632">
    <property type="term" value="P:D-alanine biosynthetic process"/>
    <property type="evidence" value="ECO:0007669"/>
    <property type="project" value="UniProtKB-UniRule"/>
</dbReference>
<dbReference type="CDD" id="cd06827">
    <property type="entry name" value="PLPDE_III_AR_proteobact"/>
    <property type="match status" value="1"/>
</dbReference>
<dbReference type="FunFam" id="2.40.37.10:FF:000002">
    <property type="entry name" value="Alanine racemase"/>
    <property type="match status" value="1"/>
</dbReference>
<dbReference type="FunFam" id="3.20.20.10:FF:000002">
    <property type="entry name" value="Alanine racemase"/>
    <property type="match status" value="1"/>
</dbReference>
<dbReference type="Gene3D" id="3.20.20.10">
    <property type="entry name" value="Alanine racemase"/>
    <property type="match status" value="1"/>
</dbReference>
<dbReference type="Gene3D" id="2.40.37.10">
    <property type="entry name" value="Lyase, Ornithine Decarboxylase, Chain A, domain 1"/>
    <property type="match status" value="1"/>
</dbReference>
<dbReference type="HAMAP" id="MF_01201">
    <property type="entry name" value="Ala_racemase"/>
    <property type="match status" value="1"/>
</dbReference>
<dbReference type="InterPro" id="IPR000821">
    <property type="entry name" value="Ala_racemase"/>
</dbReference>
<dbReference type="InterPro" id="IPR009006">
    <property type="entry name" value="Ala_racemase/Decarboxylase_C"/>
</dbReference>
<dbReference type="InterPro" id="IPR011079">
    <property type="entry name" value="Ala_racemase_C"/>
</dbReference>
<dbReference type="InterPro" id="IPR001608">
    <property type="entry name" value="Ala_racemase_N"/>
</dbReference>
<dbReference type="InterPro" id="IPR020622">
    <property type="entry name" value="Ala_racemase_pyridoxalP-BS"/>
</dbReference>
<dbReference type="InterPro" id="IPR029066">
    <property type="entry name" value="PLP-binding_barrel"/>
</dbReference>
<dbReference type="NCBIfam" id="TIGR00492">
    <property type="entry name" value="alr"/>
    <property type="match status" value="1"/>
</dbReference>
<dbReference type="PANTHER" id="PTHR30511">
    <property type="entry name" value="ALANINE RACEMASE"/>
    <property type="match status" value="1"/>
</dbReference>
<dbReference type="PANTHER" id="PTHR30511:SF4">
    <property type="entry name" value="ALANINE RACEMASE, BIOSYNTHETIC"/>
    <property type="match status" value="1"/>
</dbReference>
<dbReference type="Pfam" id="PF00842">
    <property type="entry name" value="Ala_racemase_C"/>
    <property type="match status" value="1"/>
</dbReference>
<dbReference type="Pfam" id="PF01168">
    <property type="entry name" value="Ala_racemase_N"/>
    <property type="match status" value="1"/>
</dbReference>
<dbReference type="PRINTS" id="PR00992">
    <property type="entry name" value="ALARACEMASE"/>
</dbReference>
<dbReference type="SMART" id="SM01005">
    <property type="entry name" value="Ala_racemase_C"/>
    <property type="match status" value="1"/>
</dbReference>
<dbReference type="SUPFAM" id="SSF50621">
    <property type="entry name" value="Alanine racemase C-terminal domain-like"/>
    <property type="match status" value="1"/>
</dbReference>
<dbReference type="SUPFAM" id="SSF51419">
    <property type="entry name" value="PLP-binding barrel"/>
    <property type="match status" value="1"/>
</dbReference>
<dbReference type="PROSITE" id="PS00395">
    <property type="entry name" value="ALANINE_RACEMASE"/>
    <property type="match status" value="1"/>
</dbReference>
<keyword id="KW-0413">Isomerase</keyword>
<keyword id="KW-0663">Pyridoxal phosphate</keyword>
<keyword id="KW-1185">Reference proteome</keyword>
<proteinExistence type="inferred from homology"/>
<accession>Q9CNL5</accession>
<feature type="chain" id="PRO_0000114544" description="Alanine racemase">
    <location>
        <begin position="1"/>
        <end position="360"/>
    </location>
</feature>
<feature type="active site" description="Proton acceptor; specific for D-alanine" evidence="1">
    <location>
        <position position="36"/>
    </location>
</feature>
<feature type="active site" description="Proton acceptor; specific for L-alanine" evidence="1">
    <location>
        <position position="256"/>
    </location>
</feature>
<feature type="binding site" evidence="1">
    <location>
        <position position="132"/>
    </location>
    <ligand>
        <name>substrate</name>
    </ligand>
</feature>
<feature type="binding site" evidence="1">
    <location>
        <position position="304"/>
    </location>
    <ligand>
        <name>substrate</name>
    </ligand>
</feature>
<feature type="modified residue" description="N6-(pyridoxal phosphate)lysine" evidence="1">
    <location>
        <position position="36"/>
    </location>
</feature>
<evidence type="ECO:0000255" key="1">
    <source>
        <dbReference type="HAMAP-Rule" id="MF_01201"/>
    </source>
</evidence>
<comment type="function">
    <text evidence="1">Catalyzes the interconversion of L-alanine and D-alanine. May also act on other amino acids.</text>
</comment>
<comment type="catalytic activity">
    <reaction evidence="1">
        <text>L-alanine = D-alanine</text>
        <dbReference type="Rhea" id="RHEA:20249"/>
        <dbReference type="ChEBI" id="CHEBI:57416"/>
        <dbReference type="ChEBI" id="CHEBI:57972"/>
        <dbReference type="EC" id="5.1.1.1"/>
    </reaction>
</comment>
<comment type="cofactor">
    <cofactor evidence="1">
        <name>pyridoxal 5'-phosphate</name>
        <dbReference type="ChEBI" id="CHEBI:597326"/>
    </cofactor>
</comment>
<comment type="pathway">
    <text evidence="1">Amino-acid biosynthesis; D-alanine biosynthesis; D-alanine from L-alanine: step 1/1.</text>
</comment>
<comment type="similarity">
    <text evidence="1">Belongs to the alanine racemase family.</text>
</comment>
<organism>
    <name type="scientific">Pasteurella multocida (strain Pm70)</name>
    <dbReference type="NCBI Taxonomy" id="272843"/>
    <lineage>
        <taxon>Bacteria</taxon>
        <taxon>Pseudomonadati</taxon>
        <taxon>Pseudomonadota</taxon>
        <taxon>Gammaproteobacteria</taxon>
        <taxon>Pasteurellales</taxon>
        <taxon>Pasteurellaceae</taxon>
        <taxon>Pasteurella</taxon>
    </lineage>
</organism>
<sequence length="360" mass="39514">MNMKPATAKISSVALKHNIQTIKQKAPQSKIIAVVKANAYGHGVVFVSAAVEELVDCFGVARLEEALSLRSNGITKPILLLEGFFCDKDLPVIAINNIQTVVHNVEQLEALKAAKVPNPIKVWLKIDTGMHRLGVALEDVEYFYQALRDSENVDPQIGFVSHFSRADELECDYTKLQLTRFLNATQNKAGEKSIAASGGILFWESSHLDWIRPGIIMYGISPINVPAQEYDLTPVMTLTSSLIAIKQHKKGEPVGYGGIWVSDKDTKIGVVAIGYGDGYPRDIPTGTPVYLNGRRVPIVGRVSMDMLTVDLGAEAQDKVGDEVILWGKELPIEEIADISGVISYELITKLTPRVLTEYID</sequence>